<sequence>MGKIIGIDLGTTNSCVAVLDGGKARVIENAEGDRTTPSIIAYTDDEIIVGQPAKRQAVTNPTNTFFAIKRLIGRRFKDDEVQRDVNIMPFKIIGADNGDAWVESRGNKMAPPQVSAEILKKMKKTAEDFLGEEVTEAVITVPAYFNDSQRQATKDAGRIAGLDVKRIINEPTAAALAYGIDKKQGDNIVAVYDLGGGTFDISIIEIDSNDGDQTFEVLATNGDTHLGGEDFDNRMINYLADEFKKDQGLDLRRDPLAMQRLKEAAEKAKIELSSTNHTEVNLPYITADASGPKHLVVKITRAKLESLVEDLIQRTLEPLKVALADADLSISDINEVILVGGQTRMPKVQEAVTNFFGKEPRKDVNPDEAVAVGAAIQAGVLSGEVKDVLLLDVTPLSLGIETMGSVMTKLIEKNTTIPTKAQQVFSTADDNQSAVTIHVLQGERKQASANKSLGQFNLEGIEPAPRGQPQVEVMFDIDADGILHVSATDKKTGKKQNITIKASSGLSDEEVEQMVRDAEAHADEDAKFEELVQARNQADGLAHSTKKQVEEAGDALASDEKEKIEAAIATLETAIKGKDKEAIDTATQALIEASAKLMEIAQAKAQGEAEGQAHDAGQEKPADDVVDAEFEEVKDDKK</sequence>
<gene>
    <name evidence="1" type="primary">dnaK</name>
    <name type="ordered locus">Sfri_0969</name>
</gene>
<dbReference type="EMBL" id="CP000447">
    <property type="protein sequence ID" value="ABI70822.1"/>
    <property type="molecule type" value="Genomic_DNA"/>
</dbReference>
<dbReference type="RefSeq" id="WP_011636443.1">
    <property type="nucleotide sequence ID" value="NC_008345.1"/>
</dbReference>
<dbReference type="SMR" id="Q086J3"/>
<dbReference type="STRING" id="318167.Sfri_0969"/>
<dbReference type="KEGG" id="sfr:Sfri_0969"/>
<dbReference type="eggNOG" id="COG0443">
    <property type="taxonomic scope" value="Bacteria"/>
</dbReference>
<dbReference type="HOGENOM" id="CLU_005965_2_1_6"/>
<dbReference type="OrthoDB" id="9766019at2"/>
<dbReference type="Proteomes" id="UP000000684">
    <property type="component" value="Chromosome"/>
</dbReference>
<dbReference type="GO" id="GO:0005524">
    <property type="term" value="F:ATP binding"/>
    <property type="evidence" value="ECO:0007669"/>
    <property type="project" value="UniProtKB-UniRule"/>
</dbReference>
<dbReference type="GO" id="GO:0140662">
    <property type="term" value="F:ATP-dependent protein folding chaperone"/>
    <property type="evidence" value="ECO:0007669"/>
    <property type="project" value="InterPro"/>
</dbReference>
<dbReference type="GO" id="GO:0051082">
    <property type="term" value="F:unfolded protein binding"/>
    <property type="evidence" value="ECO:0007669"/>
    <property type="project" value="InterPro"/>
</dbReference>
<dbReference type="CDD" id="cd10234">
    <property type="entry name" value="ASKHA_NBD_HSP70_DnaK-like"/>
    <property type="match status" value="1"/>
</dbReference>
<dbReference type="FunFam" id="2.60.34.10:FF:000014">
    <property type="entry name" value="Chaperone protein DnaK HSP70"/>
    <property type="match status" value="1"/>
</dbReference>
<dbReference type="FunFam" id="3.30.30.30:FF:000003">
    <property type="entry name" value="Heat shock protein 9"/>
    <property type="match status" value="1"/>
</dbReference>
<dbReference type="FunFam" id="1.20.1270.10:FF:000001">
    <property type="entry name" value="Molecular chaperone DnaK"/>
    <property type="match status" value="1"/>
</dbReference>
<dbReference type="FunFam" id="3.30.420.40:FF:000004">
    <property type="entry name" value="Molecular chaperone DnaK"/>
    <property type="match status" value="1"/>
</dbReference>
<dbReference type="FunFam" id="3.90.640.10:FF:000003">
    <property type="entry name" value="Molecular chaperone DnaK"/>
    <property type="match status" value="1"/>
</dbReference>
<dbReference type="Gene3D" id="1.20.1270.10">
    <property type="match status" value="1"/>
</dbReference>
<dbReference type="Gene3D" id="3.30.420.40">
    <property type="match status" value="2"/>
</dbReference>
<dbReference type="Gene3D" id="3.90.640.10">
    <property type="entry name" value="Actin, Chain A, domain 4"/>
    <property type="match status" value="1"/>
</dbReference>
<dbReference type="Gene3D" id="2.60.34.10">
    <property type="entry name" value="Substrate Binding Domain Of DNAk, Chain A, domain 1"/>
    <property type="match status" value="1"/>
</dbReference>
<dbReference type="HAMAP" id="MF_00332">
    <property type="entry name" value="DnaK"/>
    <property type="match status" value="1"/>
</dbReference>
<dbReference type="InterPro" id="IPR043129">
    <property type="entry name" value="ATPase_NBD"/>
</dbReference>
<dbReference type="InterPro" id="IPR012725">
    <property type="entry name" value="Chaperone_DnaK"/>
</dbReference>
<dbReference type="InterPro" id="IPR018181">
    <property type="entry name" value="Heat_shock_70_CS"/>
</dbReference>
<dbReference type="InterPro" id="IPR029048">
    <property type="entry name" value="HSP70_C_sf"/>
</dbReference>
<dbReference type="InterPro" id="IPR029047">
    <property type="entry name" value="HSP70_peptide-bd_sf"/>
</dbReference>
<dbReference type="InterPro" id="IPR013126">
    <property type="entry name" value="Hsp_70_fam"/>
</dbReference>
<dbReference type="NCBIfam" id="NF001413">
    <property type="entry name" value="PRK00290.1"/>
    <property type="match status" value="1"/>
</dbReference>
<dbReference type="NCBIfam" id="NF003520">
    <property type="entry name" value="PRK05183.1"/>
    <property type="match status" value="1"/>
</dbReference>
<dbReference type="NCBIfam" id="TIGR02350">
    <property type="entry name" value="prok_dnaK"/>
    <property type="match status" value="1"/>
</dbReference>
<dbReference type="PANTHER" id="PTHR19375">
    <property type="entry name" value="HEAT SHOCK PROTEIN 70KDA"/>
    <property type="match status" value="1"/>
</dbReference>
<dbReference type="Pfam" id="PF00012">
    <property type="entry name" value="HSP70"/>
    <property type="match status" value="1"/>
</dbReference>
<dbReference type="PRINTS" id="PR00301">
    <property type="entry name" value="HEATSHOCK70"/>
</dbReference>
<dbReference type="SUPFAM" id="SSF53067">
    <property type="entry name" value="Actin-like ATPase domain"/>
    <property type="match status" value="2"/>
</dbReference>
<dbReference type="SUPFAM" id="SSF100920">
    <property type="entry name" value="Heat shock protein 70kD (HSP70), peptide-binding domain"/>
    <property type="match status" value="1"/>
</dbReference>
<dbReference type="PROSITE" id="PS00297">
    <property type="entry name" value="HSP70_1"/>
    <property type="match status" value="1"/>
</dbReference>
<dbReference type="PROSITE" id="PS00329">
    <property type="entry name" value="HSP70_2"/>
    <property type="match status" value="1"/>
</dbReference>
<dbReference type="PROSITE" id="PS01036">
    <property type="entry name" value="HSP70_3"/>
    <property type="match status" value="1"/>
</dbReference>
<evidence type="ECO:0000255" key="1">
    <source>
        <dbReference type="HAMAP-Rule" id="MF_00332"/>
    </source>
</evidence>
<evidence type="ECO:0000256" key="2">
    <source>
        <dbReference type="SAM" id="MobiDB-lite"/>
    </source>
</evidence>
<name>DNAK_SHEFN</name>
<proteinExistence type="inferred from homology"/>
<comment type="function">
    <text evidence="1">Acts as a chaperone.</text>
</comment>
<comment type="induction">
    <text evidence="1">By stress conditions e.g. heat shock.</text>
</comment>
<comment type="similarity">
    <text evidence="1">Belongs to the heat shock protein 70 family.</text>
</comment>
<accession>Q086J3</accession>
<keyword id="KW-0067">ATP-binding</keyword>
<keyword id="KW-0143">Chaperone</keyword>
<keyword id="KW-0547">Nucleotide-binding</keyword>
<keyword id="KW-0597">Phosphoprotein</keyword>
<keyword id="KW-1185">Reference proteome</keyword>
<keyword id="KW-0346">Stress response</keyword>
<protein>
    <recommendedName>
        <fullName evidence="1">Chaperone protein DnaK</fullName>
    </recommendedName>
    <alternativeName>
        <fullName evidence="1">HSP70</fullName>
    </alternativeName>
    <alternativeName>
        <fullName evidence="1">Heat shock 70 kDa protein</fullName>
    </alternativeName>
    <alternativeName>
        <fullName evidence="1">Heat shock protein 70</fullName>
    </alternativeName>
</protein>
<reference key="1">
    <citation type="submission" date="2006-08" db="EMBL/GenBank/DDBJ databases">
        <title>Complete sequence of Shewanella frigidimarina NCIMB 400.</title>
        <authorList>
            <consortium name="US DOE Joint Genome Institute"/>
            <person name="Copeland A."/>
            <person name="Lucas S."/>
            <person name="Lapidus A."/>
            <person name="Barry K."/>
            <person name="Detter J.C."/>
            <person name="Glavina del Rio T."/>
            <person name="Hammon N."/>
            <person name="Israni S."/>
            <person name="Dalin E."/>
            <person name="Tice H."/>
            <person name="Pitluck S."/>
            <person name="Fredrickson J.K."/>
            <person name="Kolker E."/>
            <person name="McCuel L.A."/>
            <person name="DiChristina T."/>
            <person name="Nealson K.H."/>
            <person name="Newman D."/>
            <person name="Tiedje J.M."/>
            <person name="Zhou J."/>
            <person name="Romine M.F."/>
            <person name="Culley D.E."/>
            <person name="Serres M."/>
            <person name="Chertkov O."/>
            <person name="Brettin T."/>
            <person name="Bruce D."/>
            <person name="Han C."/>
            <person name="Tapia R."/>
            <person name="Gilna P."/>
            <person name="Schmutz J."/>
            <person name="Larimer F."/>
            <person name="Land M."/>
            <person name="Hauser L."/>
            <person name="Kyrpides N."/>
            <person name="Mikhailova N."/>
            <person name="Richardson P."/>
        </authorList>
    </citation>
    <scope>NUCLEOTIDE SEQUENCE [LARGE SCALE GENOMIC DNA]</scope>
    <source>
        <strain>NCIMB 400</strain>
    </source>
</reference>
<feature type="chain" id="PRO_1000059662" description="Chaperone protein DnaK">
    <location>
        <begin position="1"/>
        <end position="638"/>
    </location>
</feature>
<feature type="region of interest" description="Disordered" evidence="2">
    <location>
        <begin position="539"/>
        <end position="559"/>
    </location>
</feature>
<feature type="region of interest" description="Disordered" evidence="2">
    <location>
        <begin position="602"/>
        <end position="638"/>
    </location>
</feature>
<feature type="compositionally biased region" description="Basic and acidic residues" evidence="2">
    <location>
        <begin position="611"/>
        <end position="623"/>
    </location>
</feature>
<feature type="compositionally biased region" description="Acidic residues" evidence="2">
    <location>
        <begin position="624"/>
        <end position="638"/>
    </location>
</feature>
<feature type="modified residue" description="Phosphothreonine; by autocatalysis" evidence="1">
    <location>
        <position position="198"/>
    </location>
</feature>
<organism>
    <name type="scientific">Shewanella frigidimarina (strain NCIMB 400)</name>
    <dbReference type="NCBI Taxonomy" id="318167"/>
    <lineage>
        <taxon>Bacteria</taxon>
        <taxon>Pseudomonadati</taxon>
        <taxon>Pseudomonadota</taxon>
        <taxon>Gammaproteobacteria</taxon>
        <taxon>Alteromonadales</taxon>
        <taxon>Shewanellaceae</taxon>
        <taxon>Shewanella</taxon>
    </lineage>
</organism>